<name>G1L8_ORYSJ</name>
<reference key="1">
    <citation type="journal article" date="2009" name="Proc. Natl. Acad. Sci. U.S.A.">
        <title>The homeotic gene long sterile lemma (G1) specifies sterile lemma identity in the rice spikelet.</title>
        <authorList>
            <person name="Yoshida A."/>
            <person name="Suzaki Y."/>
            <person name="Tanaka W."/>
            <person name="Hirano H.-Y."/>
        </authorList>
    </citation>
    <scope>NUCLEOTIDE SEQUENCE [MRNA]</scope>
    <scope>GENE FAMILY</scope>
    <scope>NOMENCLATURE</scope>
    <source>
        <strain>cv. Nipponbare</strain>
    </source>
</reference>
<reference key="2">
    <citation type="journal article" date="2005" name="Mol. Genet. Genomics">
        <title>A fine physical map of the rice chromosome 5.</title>
        <authorList>
            <person name="Cheng C.-H."/>
            <person name="Chung M.C."/>
            <person name="Liu S.-M."/>
            <person name="Chen S.-K."/>
            <person name="Kao F.Y."/>
            <person name="Lin S.-J."/>
            <person name="Hsiao S.-H."/>
            <person name="Tseng I.C."/>
            <person name="Hsing Y.-I.C."/>
            <person name="Wu H.-P."/>
            <person name="Chen C.-S."/>
            <person name="Shaw J.-F."/>
            <person name="Wu J."/>
            <person name="Matsumoto T."/>
            <person name="Sasaki T."/>
            <person name="Chen H.-C."/>
            <person name="Chow T.-Y."/>
        </authorList>
    </citation>
    <scope>NUCLEOTIDE SEQUENCE [LARGE SCALE GENOMIC DNA]</scope>
    <source>
        <strain>cv. Nipponbare</strain>
    </source>
</reference>
<reference key="3">
    <citation type="journal article" date="2005" name="Nature">
        <title>The map-based sequence of the rice genome.</title>
        <authorList>
            <consortium name="International rice genome sequencing project (IRGSP)"/>
        </authorList>
    </citation>
    <scope>NUCLEOTIDE SEQUENCE [LARGE SCALE GENOMIC DNA]</scope>
    <source>
        <strain>cv. Nipponbare</strain>
    </source>
</reference>
<reference key="4">
    <citation type="journal article" date="2008" name="Nucleic Acids Res.">
        <title>The rice annotation project database (RAP-DB): 2008 update.</title>
        <authorList>
            <consortium name="The rice annotation project (RAP)"/>
        </authorList>
    </citation>
    <scope>GENOME REANNOTATION</scope>
    <source>
        <strain>cv. Nipponbare</strain>
    </source>
</reference>
<reference key="5">
    <citation type="journal article" date="2013" name="Rice">
        <title>Improvement of the Oryza sativa Nipponbare reference genome using next generation sequence and optical map data.</title>
        <authorList>
            <person name="Kawahara Y."/>
            <person name="de la Bastide M."/>
            <person name="Hamilton J.P."/>
            <person name="Kanamori H."/>
            <person name="McCombie W.R."/>
            <person name="Ouyang S."/>
            <person name="Schwartz D.C."/>
            <person name="Tanaka T."/>
            <person name="Wu J."/>
            <person name="Zhou S."/>
            <person name="Childs K.L."/>
            <person name="Davidson R.M."/>
            <person name="Lin H."/>
            <person name="Quesada-Ocampo L."/>
            <person name="Vaillancourt B."/>
            <person name="Sakai H."/>
            <person name="Lee S.S."/>
            <person name="Kim J."/>
            <person name="Numa H."/>
            <person name="Itoh T."/>
            <person name="Buell C.R."/>
            <person name="Matsumoto T."/>
        </authorList>
    </citation>
    <scope>GENOME REANNOTATION</scope>
    <source>
        <strain>cv. Nipponbare</strain>
    </source>
</reference>
<reference key="6">
    <citation type="journal article" date="2012" name="Biol. Direct">
        <title>ALOG domains: provenance of plant homeotic and developmental regulators from the DNA-binding domain of a novel class of DIRS1-type retroposons.</title>
        <authorList>
            <person name="Iyer L.M."/>
            <person name="Aravind L."/>
        </authorList>
    </citation>
    <scope>DNA-BINDING</scope>
    <scope>GENE FAMILY</scope>
</reference>
<sequence length="238" mass="24726">MEGGGGGADGQAQPVAQAPPAMQPMQQLSRYESQKRRDWNTFLQYLKNHRPPLTLARCSGAHVIEFLKYLDQFGKTKVHASGCAYYGQPSPPAPCPCPLRQAWGSLDALIGRLRAAYEESGHAPESNPFAARAVRIYLREVRDAQAKARGIPYEKKKRKRTQQQQPPPPPPPPPQHQPGAAAGEASSSSSAAAAAVAAEGSGSSAAAAAATSQTGGGGGGSTTTTTASAAAPTTATRV</sequence>
<comment type="function">
    <text evidence="1">Probable transcription regulator that acts as a developmental regulator by promoting cell growth in response to light.</text>
</comment>
<comment type="subcellular location">
    <subcellularLocation>
        <location evidence="1">Nucleus</location>
    </subcellularLocation>
</comment>
<comment type="similarity">
    <text evidence="4">Belongs to the plant homeotic and developmental regulators ALOG protein family.</text>
</comment>
<gene>
    <name type="primary">G1L8</name>
    <name type="ordered locus">Os05g0472000</name>
    <name type="ordered locus">LOC_Os05g39500</name>
    <name type="ORF">OSJNBa0052E20.15</name>
    <name type="ORF">P0015C02.10</name>
</gene>
<organism>
    <name type="scientific">Oryza sativa subsp. japonica</name>
    <name type="common">Rice</name>
    <dbReference type="NCBI Taxonomy" id="39947"/>
    <lineage>
        <taxon>Eukaryota</taxon>
        <taxon>Viridiplantae</taxon>
        <taxon>Streptophyta</taxon>
        <taxon>Embryophyta</taxon>
        <taxon>Tracheophyta</taxon>
        <taxon>Spermatophyta</taxon>
        <taxon>Magnoliopsida</taxon>
        <taxon>Liliopsida</taxon>
        <taxon>Poales</taxon>
        <taxon>Poaceae</taxon>
        <taxon>BOP clade</taxon>
        <taxon>Oryzoideae</taxon>
        <taxon>Oryzeae</taxon>
        <taxon>Oryzinae</taxon>
        <taxon>Oryza</taxon>
        <taxon>Oryza sativa</taxon>
    </lineage>
</organism>
<accession>Q6ATW6</accession>
<accession>A0A0N7KKY3</accession>
<dbReference type="EMBL" id="AB512497">
    <property type="protein sequence ID" value="BAI52986.1"/>
    <property type="molecule type" value="mRNA"/>
</dbReference>
<dbReference type="EMBL" id="AC121364">
    <property type="protein sequence ID" value="AAT93958.1"/>
    <property type="molecule type" value="Genomic_DNA"/>
</dbReference>
<dbReference type="EMBL" id="AC135423">
    <property type="protein sequence ID" value="AAT94018.1"/>
    <property type="molecule type" value="Genomic_DNA"/>
</dbReference>
<dbReference type="EMBL" id="AP008211">
    <property type="status" value="NOT_ANNOTATED_CDS"/>
    <property type="molecule type" value="Genomic_DNA"/>
</dbReference>
<dbReference type="EMBL" id="AP014961">
    <property type="protein sequence ID" value="BAS94497.1"/>
    <property type="molecule type" value="Genomic_DNA"/>
</dbReference>
<dbReference type="SMR" id="Q6ATW6"/>
<dbReference type="PaxDb" id="39947-Q6ATW6"/>
<dbReference type="EnsemblPlants" id="Os05t0472000-00">
    <property type="protein sequence ID" value="Os05t0472000-00"/>
    <property type="gene ID" value="Os05g0472000"/>
</dbReference>
<dbReference type="GeneID" id="107278201"/>
<dbReference type="Gramene" id="Os05t0472000-00">
    <property type="protein sequence ID" value="Os05t0472000-00"/>
    <property type="gene ID" value="Os05g0472000"/>
</dbReference>
<dbReference type="KEGG" id="osa:107278201"/>
<dbReference type="eggNOG" id="ENOG502QPZE">
    <property type="taxonomic scope" value="Eukaryota"/>
</dbReference>
<dbReference type="HOGENOM" id="CLU_071168_2_1_1"/>
<dbReference type="InParanoid" id="Q6ATW6"/>
<dbReference type="OMA" id="TKVHISE"/>
<dbReference type="OrthoDB" id="1906822at2759"/>
<dbReference type="Proteomes" id="UP000000763">
    <property type="component" value="Chromosome 5"/>
</dbReference>
<dbReference type="Proteomes" id="UP000059680">
    <property type="component" value="Chromosome 5"/>
</dbReference>
<dbReference type="GO" id="GO:0005634">
    <property type="term" value="C:nucleus"/>
    <property type="evidence" value="ECO:0000250"/>
    <property type="project" value="UniProtKB"/>
</dbReference>
<dbReference type="GO" id="GO:0003677">
    <property type="term" value="F:DNA binding"/>
    <property type="evidence" value="ECO:0007669"/>
    <property type="project" value="UniProtKB-KW"/>
</dbReference>
<dbReference type="GO" id="GO:0009299">
    <property type="term" value="P:mRNA transcription"/>
    <property type="evidence" value="ECO:0000250"/>
    <property type="project" value="UniProtKB"/>
</dbReference>
<dbReference type="GO" id="GO:0090698">
    <property type="term" value="P:post-embryonic plant morphogenesis"/>
    <property type="evidence" value="ECO:0000250"/>
    <property type="project" value="UniProtKB"/>
</dbReference>
<dbReference type="GO" id="GO:0009416">
    <property type="term" value="P:response to light stimulus"/>
    <property type="evidence" value="ECO:0000318"/>
    <property type="project" value="GO_Central"/>
</dbReference>
<dbReference type="InterPro" id="IPR040222">
    <property type="entry name" value="ALOG"/>
</dbReference>
<dbReference type="InterPro" id="IPR006936">
    <property type="entry name" value="ALOG_dom"/>
</dbReference>
<dbReference type="PANTHER" id="PTHR31165">
    <property type="entry name" value="PROTEIN G1-LIKE2"/>
    <property type="match status" value="1"/>
</dbReference>
<dbReference type="PANTHER" id="PTHR31165:SF18">
    <property type="entry name" value="PROTEIN G1-LIKE8"/>
    <property type="match status" value="1"/>
</dbReference>
<dbReference type="Pfam" id="PF04852">
    <property type="entry name" value="ALOG_dom"/>
    <property type="match status" value="1"/>
</dbReference>
<dbReference type="PROSITE" id="PS51697">
    <property type="entry name" value="ALOG"/>
    <property type="match status" value="1"/>
</dbReference>
<evidence type="ECO:0000250" key="1"/>
<evidence type="ECO:0000255" key="2">
    <source>
        <dbReference type="PROSITE-ProRule" id="PRU01033"/>
    </source>
</evidence>
<evidence type="ECO:0000256" key="3">
    <source>
        <dbReference type="SAM" id="MobiDB-lite"/>
    </source>
</evidence>
<evidence type="ECO:0000305" key="4"/>
<protein>
    <recommendedName>
        <fullName>Protein G1-like8</fullName>
    </recommendedName>
</protein>
<keyword id="KW-0217">Developmental protein</keyword>
<keyword id="KW-0238">DNA-binding</keyword>
<keyword id="KW-0539">Nucleus</keyword>
<keyword id="KW-1185">Reference proteome</keyword>
<keyword id="KW-0804">Transcription</keyword>
<keyword id="KW-0805">Transcription regulation</keyword>
<feature type="chain" id="PRO_0000425312" description="Protein G1-like8">
    <location>
        <begin position="1"/>
        <end position="238"/>
    </location>
</feature>
<feature type="domain" description="ALOG" evidence="2">
    <location>
        <begin position="30"/>
        <end position="157"/>
    </location>
</feature>
<feature type="region of interest" description="Disordered" evidence="3">
    <location>
        <begin position="1"/>
        <end position="33"/>
    </location>
</feature>
<feature type="region of interest" description="Disordered" evidence="3">
    <location>
        <begin position="147"/>
        <end position="238"/>
    </location>
</feature>
<feature type="short sequence motif" description="Nuclear localization signal" evidence="1">
    <location>
        <begin position="155"/>
        <end position="159"/>
    </location>
</feature>
<feature type="compositionally biased region" description="Low complexity" evidence="3">
    <location>
        <begin position="10"/>
        <end position="27"/>
    </location>
</feature>
<feature type="compositionally biased region" description="Pro residues" evidence="3">
    <location>
        <begin position="165"/>
        <end position="176"/>
    </location>
</feature>
<feature type="compositionally biased region" description="Low complexity" evidence="3">
    <location>
        <begin position="177"/>
        <end position="213"/>
    </location>
</feature>
<feature type="compositionally biased region" description="Low complexity" evidence="3">
    <location>
        <begin position="222"/>
        <end position="238"/>
    </location>
</feature>
<proteinExistence type="evidence at protein level"/>